<comment type="function">
    <text evidence="1">NDH shuttles electrons from NAD(P)H:plastoquinone, via FMN and iron-sulfur (Fe-S) centers, to quinones in the photosynthetic chain and possibly in a chloroplast respiratory chain. The immediate electron acceptor for the enzyme in this species is believed to be plastoquinone. Couples the redox reaction to proton translocation, and thus conserves the redox energy in a proton gradient.</text>
</comment>
<comment type="catalytic activity">
    <reaction evidence="1">
        <text>a plastoquinone + NADH + (n+1) H(+)(in) = a plastoquinol + NAD(+) + n H(+)(out)</text>
        <dbReference type="Rhea" id="RHEA:42608"/>
        <dbReference type="Rhea" id="RHEA-COMP:9561"/>
        <dbReference type="Rhea" id="RHEA-COMP:9562"/>
        <dbReference type="ChEBI" id="CHEBI:15378"/>
        <dbReference type="ChEBI" id="CHEBI:17757"/>
        <dbReference type="ChEBI" id="CHEBI:57540"/>
        <dbReference type="ChEBI" id="CHEBI:57945"/>
        <dbReference type="ChEBI" id="CHEBI:62192"/>
    </reaction>
</comment>
<comment type="catalytic activity">
    <reaction evidence="1">
        <text>a plastoquinone + NADPH + (n+1) H(+)(in) = a plastoquinol + NADP(+) + n H(+)(out)</text>
        <dbReference type="Rhea" id="RHEA:42612"/>
        <dbReference type="Rhea" id="RHEA-COMP:9561"/>
        <dbReference type="Rhea" id="RHEA-COMP:9562"/>
        <dbReference type="ChEBI" id="CHEBI:15378"/>
        <dbReference type="ChEBI" id="CHEBI:17757"/>
        <dbReference type="ChEBI" id="CHEBI:57783"/>
        <dbReference type="ChEBI" id="CHEBI:58349"/>
        <dbReference type="ChEBI" id="CHEBI:62192"/>
    </reaction>
</comment>
<comment type="subunit">
    <text evidence="1">NDH is composed of at least 16 different subunits, 5 of which are encoded in the nucleus.</text>
</comment>
<comment type="subcellular location">
    <subcellularLocation>
        <location evidence="1">Plastid</location>
        <location evidence="1">Chloroplast thylakoid membrane</location>
        <topology evidence="1">Multi-pass membrane protein</topology>
    </subcellularLocation>
</comment>
<comment type="similarity">
    <text evidence="1">Belongs to the complex I subunit 1 family.</text>
</comment>
<gene>
    <name evidence="1" type="primary">ndhA</name>
</gene>
<geneLocation type="chloroplast"/>
<name>NU1C_AETCO</name>
<sequence length="360" mass="40202">MIIFATEVQTINSFVRLESFKEVYGLIWGFLPIFSLVVGIVTGVLVLVWLEREISARIQQRIGPEYAGALGILQALADGIKLLFKENLRPSRGNTTLFSIGPSLAVISILLSYSVIPFSNHLVLADFNIGIFLWIAISSIAPIGLLMSGYGSNNKYSFLGGLRAAAQSISYEIPLTLCLLSISLLSNSLSTVDIVEAQSKYGFWGWNLWRQPIGFIIFLISSLAECERLPFDLPEAEEELVAGYQTEYSGIKFGLFYVASYLNLLISSLFVTVLYLGGWNISLPYISSLELFERDPIFGTTIGIFITLAKTYLFLFISITTRWTLLRLRMDQLLNFGWKFLLPISLGNLLLTTSFQVFSL</sequence>
<dbReference type="EC" id="7.1.1.-" evidence="1"/>
<dbReference type="EMBL" id="AP009366">
    <property type="protein sequence ID" value="BAF49826.1"/>
    <property type="molecule type" value="Genomic_DNA"/>
</dbReference>
<dbReference type="RefSeq" id="YP_001123001.1">
    <property type="nucleotide sequence ID" value="NC_009265.1"/>
</dbReference>
<dbReference type="SMR" id="A4QJH1"/>
<dbReference type="GeneID" id="4968570"/>
<dbReference type="GO" id="GO:0009535">
    <property type="term" value="C:chloroplast thylakoid membrane"/>
    <property type="evidence" value="ECO:0007669"/>
    <property type="project" value="UniProtKB-SubCell"/>
</dbReference>
<dbReference type="GO" id="GO:0003954">
    <property type="term" value="F:NADH dehydrogenase activity"/>
    <property type="evidence" value="ECO:0007669"/>
    <property type="project" value="TreeGrafter"/>
</dbReference>
<dbReference type="GO" id="GO:0016655">
    <property type="term" value="F:oxidoreductase activity, acting on NAD(P)H, quinone or similar compound as acceptor"/>
    <property type="evidence" value="ECO:0007669"/>
    <property type="project" value="UniProtKB-UniRule"/>
</dbReference>
<dbReference type="GO" id="GO:0048038">
    <property type="term" value="F:quinone binding"/>
    <property type="evidence" value="ECO:0007669"/>
    <property type="project" value="UniProtKB-KW"/>
</dbReference>
<dbReference type="GO" id="GO:0009060">
    <property type="term" value="P:aerobic respiration"/>
    <property type="evidence" value="ECO:0007669"/>
    <property type="project" value="TreeGrafter"/>
</dbReference>
<dbReference type="GO" id="GO:0019684">
    <property type="term" value="P:photosynthesis, light reaction"/>
    <property type="evidence" value="ECO:0007669"/>
    <property type="project" value="UniProtKB-UniRule"/>
</dbReference>
<dbReference type="HAMAP" id="MF_01350">
    <property type="entry name" value="NDH1_NuoH"/>
    <property type="match status" value="1"/>
</dbReference>
<dbReference type="InterPro" id="IPR001694">
    <property type="entry name" value="NADH_UbQ_OxRdtase_su1/FPO"/>
</dbReference>
<dbReference type="InterPro" id="IPR018086">
    <property type="entry name" value="NADH_UbQ_OxRdtase_su1_CS"/>
</dbReference>
<dbReference type="NCBIfam" id="NF004741">
    <property type="entry name" value="PRK06076.1-2"/>
    <property type="match status" value="1"/>
</dbReference>
<dbReference type="PANTHER" id="PTHR11432">
    <property type="entry name" value="NADH DEHYDROGENASE SUBUNIT 1"/>
    <property type="match status" value="1"/>
</dbReference>
<dbReference type="PANTHER" id="PTHR11432:SF3">
    <property type="entry name" value="NADH-UBIQUINONE OXIDOREDUCTASE CHAIN 1"/>
    <property type="match status" value="1"/>
</dbReference>
<dbReference type="Pfam" id="PF00146">
    <property type="entry name" value="NADHdh"/>
    <property type="match status" value="1"/>
</dbReference>
<dbReference type="PROSITE" id="PS00667">
    <property type="entry name" value="COMPLEX1_ND1_1"/>
    <property type="match status" value="1"/>
</dbReference>
<dbReference type="PROSITE" id="PS00668">
    <property type="entry name" value="COMPLEX1_ND1_2"/>
    <property type="match status" value="1"/>
</dbReference>
<reference key="1">
    <citation type="submission" date="2007-03" db="EMBL/GenBank/DDBJ databases">
        <title>Sequencing analysis of Aethionema coridifolium chloroplast DNA.</title>
        <authorList>
            <person name="Hosouchi T."/>
            <person name="Tsuruoka H."/>
            <person name="Kotani H."/>
        </authorList>
    </citation>
    <scope>NUCLEOTIDE SEQUENCE [LARGE SCALE GENOMIC DNA]</scope>
</reference>
<evidence type="ECO:0000255" key="1">
    <source>
        <dbReference type="HAMAP-Rule" id="MF_01350"/>
    </source>
</evidence>
<protein>
    <recommendedName>
        <fullName evidence="1">NAD(P)H-quinone oxidoreductase subunit 1, chloroplastic</fullName>
        <ecNumber evidence="1">7.1.1.-</ecNumber>
    </recommendedName>
    <alternativeName>
        <fullName evidence="1">NAD(P)H dehydrogenase subunit 1</fullName>
        <shortName evidence="1">NDH subunit 1</shortName>
    </alternativeName>
    <alternativeName>
        <fullName evidence="1">NADH-plastoquinone oxidoreductase subunit 1</fullName>
    </alternativeName>
</protein>
<accession>A4QJH1</accession>
<feature type="chain" id="PRO_0000298862" description="NAD(P)H-quinone oxidoreductase subunit 1, chloroplastic">
    <location>
        <begin position="1"/>
        <end position="360"/>
    </location>
</feature>
<feature type="transmembrane region" description="Helical" evidence="1">
    <location>
        <begin position="30"/>
        <end position="50"/>
    </location>
</feature>
<feature type="transmembrane region" description="Helical" evidence="1">
    <location>
        <begin position="98"/>
        <end position="118"/>
    </location>
</feature>
<feature type="transmembrane region" description="Helical" evidence="1">
    <location>
        <begin position="127"/>
        <end position="147"/>
    </location>
</feature>
<feature type="transmembrane region" description="Helical" evidence="1">
    <location>
        <begin position="165"/>
        <end position="185"/>
    </location>
</feature>
<feature type="transmembrane region" description="Helical" evidence="1">
    <location>
        <begin position="203"/>
        <end position="223"/>
    </location>
</feature>
<feature type="transmembrane region" description="Helical" evidence="1">
    <location>
        <begin position="253"/>
        <end position="273"/>
    </location>
</feature>
<feature type="transmembrane region" description="Helical" evidence="1">
    <location>
        <begin position="297"/>
        <end position="317"/>
    </location>
</feature>
<feature type="transmembrane region" description="Helical" evidence="1">
    <location>
        <begin position="340"/>
        <end position="360"/>
    </location>
</feature>
<proteinExistence type="inferred from homology"/>
<keyword id="KW-0150">Chloroplast</keyword>
<keyword id="KW-0472">Membrane</keyword>
<keyword id="KW-0520">NAD</keyword>
<keyword id="KW-0521">NADP</keyword>
<keyword id="KW-0934">Plastid</keyword>
<keyword id="KW-0618">Plastoquinone</keyword>
<keyword id="KW-0874">Quinone</keyword>
<keyword id="KW-0793">Thylakoid</keyword>
<keyword id="KW-1278">Translocase</keyword>
<keyword id="KW-0812">Transmembrane</keyword>
<keyword id="KW-1133">Transmembrane helix</keyword>
<organism>
    <name type="scientific">Aethionema cordifolium</name>
    <name type="common">Lebanon stonecress</name>
    <dbReference type="NCBI Taxonomy" id="434059"/>
    <lineage>
        <taxon>Eukaryota</taxon>
        <taxon>Viridiplantae</taxon>
        <taxon>Streptophyta</taxon>
        <taxon>Embryophyta</taxon>
        <taxon>Tracheophyta</taxon>
        <taxon>Spermatophyta</taxon>
        <taxon>Magnoliopsida</taxon>
        <taxon>eudicotyledons</taxon>
        <taxon>Gunneridae</taxon>
        <taxon>Pentapetalae</taxon>
        <taxon>rosids</taxon>
        <taxon>malvids</taxon>
        <taxon>Brassicales</taxon>
        <taxon>Brassicaceae</taxon>
        <taxon>Aethionemeae</taxon>
        <taxon>Aethionema</taxon>
    </lineage>
</organism>